<accession>Q89X72</accession>
<reference key="1">
    <citation type="journal article" date="2002" name="DNA Res.">
        <title>Complete genomic sequence of nitrogen-fixing symbiotic bacterium Bradyrhizobium japonicum USDA110.</title>
        <authorList>
            <person name="Kaneko T."/>
            <person name="Nakamura Y."/>
            <person name="Sato S."/>
            <person name="Minamisawa K."/>
            <person name="Uchiumi T."/>
            <person name="Sasamoto S."/>
            <person name="Watanabe A."/>
            <person name="Idesawa K."/>
            <person name="Iriguchi M."/>
            <person name="Kawashima K."/>
            <person name="Kohara M."/>
            <person name="Matsumoto M."/>
            <person name="Shimpo S."/>
            <person name="Tsuruoka H."/>
            <person name="Wada T."/>
            <person name="Yamada M."/>
            <person name="Tabata S."/>
        </authorList>
    </citation>
    <scope>NUCLEOTIDE SEQUENCE [LARGE SCALE GENOMIC DNA]</scope>
    <source>
        <strain>JCM 10833 / BCRC 13528 / IAM 13628 / NBRC 14792 / USDA 110</strain>
    </source>
</reference>
<gene>
    <name evidence="1" type="primary">atpA</name>
    <name type="ordered locus">bll0442</name>
</gene>
<name>ATPA_BRADU</name>
<organism>
    <name type="scientific">Bradyrhizobium diazoefficiens (strain JCM 10833 / BCRC 13528 / IAM 13628 / NBRC 14792 / USDA 110)</name>
    <dbReference type="NCBI Taxonomy" id="224911"/>
    <lineage>
        <taxon>Bacteria</taxon>
        <taxon>Pseudomonadati</taxon>
        <taxon>Pseudomonadota</taxon>
        <taxon>Alphaproteobacteria</taxon>
        <taxon>Hyphomicrobiales</taxon>
        <taxon>Nitrobacteraceae</taxon>
        <taxon>Bradyrhizobium</taxon>
    </lineage>
</organism>
<feature type="chain" id="PRO_0000238212" description="ATP synthase subunit alpha">
    <location>
        <begin position="1"/>
        <end position="509"/>
    </location>
</feature>
<feature type="binding site" evidence="1">
    <location>
        <begin position="169"/>
        <end position="176"/>
    </location>
    <ligand>
        <name>ATP</name>
        <dbReference type="ChEBI" id="CHEBI:30616"/>
    </ligand>
</feature>
<feature type="site" description="Required for activity" evidence="1">
    <location>
        <position position="370"/>
    </location>
</feature>
<protein>
    <recommendedName>
        <fullName evidence="1">ATP synthase subunit alpha</fullName>
        <ecNumber evidence="1">7.1.2.2</ecNumber>
    </recommendedName>
    <alternativeName>
        <fullName evidence="1">ATP synthase F1 sector subunit alpha</fullName>
    </alternativeName>
    <alternativeName>
        <fullName evidence="1">F-ATPase subunit alpha</fullName>
    </alternativeName>
</protein>
<dbReference type="EC" id="7.1.2.2" evidence="1"/>
<dbReference type="EMBL" id="BA000040">
    <property type="protein sequence ID" value="BAC45707.1"/>
    <property type="molecule type" value="Genomic_DNA"/>
</dbReference>
<dbReference type="RefSeq" id="NP_767082.1">
    <property type="nucleotide sequence ID" value="NC_004463.1"/>
</dbReference>
<dbReference type="RefSeq" id="WP_011083274.1">
    <property type="nucleotide sequence ID" value="NC_004463.1"/>
</dbReference>
<dbReference type="SMR" id="Q89X72"/>
<dbReference type="FunCoup" id="Q89X72">
    <property type="interactions" value="523"/>
</dbReference>
<dbReference type="STRING" id="224911.AAV28_41460"/>
<dbReference type="EnsemblBacteria" id="BAC45707">
    <property type="protein sequence ID" value="BAC45707"/>
    <property type="gene ID" value="BAC45707"/>
</dbReference>
<dbReference type="GeneID" id="46495588"/>
<dbReference type="KEGG" id="bja:bll0442"/>
<dbReference type="PATRIC" id="fig|224911.44.peg.8972"/>
<dbReference type="eggNOG" id="COG0056">
    <property type="taxonomic scope" value="Bacteria"/>
</dbReference>
<dbReference type="HOGENOM" id="CLU_010091_2_1_5"/>
<dbReference type="InParanoid" id="Q89X72"/>
<dbReference type="OrthoDB" id="9803053at2"/>
<dbReference type="PhylomeDB" id="Q89X72"/>
<dbReference type="Proteomes" id="UP000002526">
    <property type="component" value="Chromosome"/>
</dbReference>
<dbReference type="GO" id="GO:0005886">
    <property type="term" value="C:plasma membrane"/>
    <property type="evidence" value="ECO:0007669"/>
    <property type="project" value="UniProtKB-SubCell"/>
</dbReference>
<dbReference type="GO" id="GO:0045259">
    <property type="term" value="C:proton-transporting ATP synthase complex"/>
    <property type="evidence" value="ECO:0007669"/>
    <property type="project" value="UniProtKB-KW"/>
</dbReference>
<dbReference type="GO" id="GO:0043531">
    <property type="term" value="F:ADP binding"/>
    <property type="evidence" value="ECO:0000318"/>
    <property type="project" value="GO_Central"/>
</dbReference>
<dbReference type="GO" id="GO:0005524">
    <property type="term" value="F:ATP binding"/>
    <property type="evidence" value="ECO:0000318"/>
    <property type="project" value="GO_Central"/>
</dbReference>
<dbReference type="GO" id="GO:0046933">
    <property type="term" value="F:proton-transporting ATP synthase activity, rotational mechanism"/>
    <property type="evidence" value="ECO:0007669"/>
    <property type="project" value="UniProtKB-UniRule"/>
</dbReference>
<dbReference type="GO" id="GO:0015986">
    <property type="term" value="P:proton motive force-driven ATP synthesis"/>
    <property type="evidence" value="ECO:0000318"/>
    <property type="project" value="GO_Central"/>
</dbReference>
<dbReference type="CDD" id="cd18113">
    <property type="entry name" value="ATP-synt_F1_alpha_C"/>
    <property type="match status" value="1"/>
</dbReference>
<dbReference type="CDD" id="cd18116">
    <property type="entry name" value="ATP-synt_F1_alpha_N"/>
    <property type="match status" value="1"/>
</dbReference>
<dbReference type="CDD" id="cd01132">
    <property type="entry name" value="F1-ATPase_alpha_CD"/>
    <property type="match status" value="1"/>
</dbReference>
<dbReference type="FunFam" id="1.20.150.20:FF:000001">
    <property type="entry name" value="ATP synthase subunit alpha"/>
    <property type="match status" value="1"/>
</dbReference>
<dbReference type="FunFam" id="2.40.30.20:FF:000001">
    <property type="entry name" value="ATP synthase subunit alpha"/>
    <property type="match status" value="1"/>
</dbReference>
<dbReference type="FunFam" id="3.40.50.300:FF:004039">
    <property type="entry name" value="ATP synthase subunit alpha, mitochondrial"/>
    <property type="match status" value="1"/>
</dbReference>
<dbReference type="Gene3D" id="2.40.30.20">
    <property type="match status" value="1"/>
</dbReference>
<dbReference type="Gene3D" id="1.20.150.20">
    <property type="entry name" value="ATP synthase alpha/beta chain, C-terminal domain"/>
    <property type="match status" value="1"/>
</dbReference>
<dbReference type="Gene3D" id="3.40.50.300">
    <property type="entry name" value="P-loop containing nucleotide triphosphate hydrolases"/>
    <property type="match status" value="1"/>
</dbReference>
<dbReference type="HAMAP" id="MF_01346">
    <property type="entry name" value="ATP_synth_alpha_bact"/>
    <property type="match status" value="1"/>
</dbReference>
<dbReference type="InterPro" id="IPR023366">
    <property type="entry name" value="ATP_synth_asu-like_sf"/>
</dbReference>
<dbReference type="InterPro" id="IPR000793">
    <property type="entry name" value="ATP_synth_asu_C"/>
</dbReference>
<dbReference type="InterPro" id="IPR038376">
    <property type="entry name" value="ATP_synth_asu_C_sf"/>
</dbReference>
<dbReference type="InterPro" id="IPR033732">
    <property type="entry name" value="ATP_synth_F1_a_nt-bd_dom"/>
</dbReference>
<dbReference type="InterPro" id="IPR005294">
    <property type="entry name" value="ATP_synth_F1_asu"/>
</dbReference>
<dbReference type="InterPro" id="IPR020003">
    <property type="entry name" value="ATPase_a/bsu_AS"/>
</dbReference>
<dbReference type="InterPro" id="IPR004100">
    <property type="entry name" value="ATPase_F1/V1/A1_a/bsu_N"/>
</dbReference>
<dbReference type="InterPro" id="IPR036121">
    <property type="entry name" value="ATPase_F1/V1/A1_a/bsu_N_sf"/>
</dbReference>
<dbReference type="InterPro" id="IPR000194">
    <property type="entry name" value="ATPase_F1/V1/A1_a/bsu_nucl-bd"/>
</dbReference>
<dbReference type="InterPro" id="IPR027417">
    <property type="entry name" value="P-loop_NTPase"/>
</dbReference>
<dbReference type="NCBIfam" id="TIGR00962">
    <property type="entry name" value="atpA"/>
    <property type="match status" value="1"/>
</dbReference>
<dbReference type="NCBIfam" id="NF009884">
    <property type="entry name" value="PRK13343.1"/>
    <property type="match status" value="1"/>
</dbReference>
<dbReference type="PANTHER" id="PTHR48082">
    <property type="entry name" value="ATP SYNTHASE SUBUNIT ALPHA, MITOCHONDRIAL"/>
    <property type="match status" value="1"/>
</dbReference>
<dbReference type="PANTHER" id="PTHR48082:SF2">
    <property type="entry name" value="ATP SYNTHASE SUBUNIT ALPHA, MITOCHONDRIAL"/>
    <property type="match status" value="1"/>
</dbReference>
<dbReference type="Pfam" id="PF00006">
    <property type="entry name" value="ATP-synt_ab"/>
    <property type="match status" value="1"/>
</dbReference>
<dbReference type="Pfam" id="PF00306">
    <property type="entry name" value="ATP-synt_ab_C"/>
    <property type="match status" value="1"/>
</dbReference>
<dbReference type="Pfam" id="PF02874">
    <property type="entry name" value="ATP-synt_ab_N"/>
    <property type="match status" value="1"/>
</dbReference>
<dbReference type="PIRSF" id="PIRSF039088">
    <property type="entry name" value="F_ATPase_subunit_alpha"/>
    <property type="match status" value="1"/>
</dbReference>
<dbReference type="SUPFAM" id="SSF47917">
    <property type="entry name" value="C-terminal domain of alpha and beta subunits of F1 ATP synthase"/>
    <property type="match status" value="1"/>
</dbReference>
<dbReference type="SUPFAM" id="SSF50615">
    <property type="entry name" value="N-terminal domain of alpha and beta subunits of F1 ATP synthase"/>
    <property type="match status" value="1"/>
</dbReference>
<dbReference type="SUPFAM" id="SSF52540">
    <property type="entry name" value="P-loop containing nucleoside triphosphate hydrolases"/>
    <property type="match status" value="1"/>
</dbReference>
<dbReference type="PROSITE" id="PS00152">
    <property type="entry name" value="ATPASE_ALPHA_BETA"/>
    <property type="match status" value="1"/>
</dbReference>
<comment type="function">
    <text evidence="1">Produces ATP from ADP in the presence of a proton gradient across the membrane. The alpha chain is a regulatory subunit.</text>
</comment>
<comment type="catalytic activity">
    <reaction evidence="1">
        <text>ATP + H2O + 4 H(+)(in) = ADP + phosphate + 5 H(+)(out)</text>
        <dbReference type="Rhea" id="RHEA:57720"/>
        <dbReference type="ChEBI" id="CHEBI:15377"/>
        <dbReference type="ChEBI" id="CHEBI:15378"/>
        <dbReference type="ChEBI" id="CHEBI:30616"/>
        <dbReference type="ChEBI" id="CHEBI:43474"/>
        <dbReference type="ChEBI" id="CHEBI:456216"/>
        <dbReference type="EC" id="7.1.2.2"/>
    </reaction>
</comment>
<comment type="subunit">
    <text evidence="1">F-type ATPases have 2 components, CF(1) - the catalytic core - and CF(0) - the membrane proton channel. CF(1) has five subunits: alpha(3), beta(3), gamma(1), delta(1), epsilon(1). CF(0) has three main subunits: a(1), b(2) and c(9-12). The alpha and beta chains form an alternating ring which encloses part of the gamma chain. CF(1) is attached to CF(0) by a central stalk formed by the gamma and epsilon chains, while a peripheral stalk is formed by the delta and b chains.</text>
</comment>
<comment type="subcellular location">
    <subcellularLocation>
        <location evidence="1">Cell inner membrane</location>
        <topology evidence="1">Peripheral membrane protein</topology>
    </subcellularLocation>
</comment>
<comment type="similarity">
    <text evidence="1">Belongs to the ATPase alpha/beta chains family.</text>
</comment>
<evidence type="ECO:0000255" key="1">
    <source>
        <dbReference type="HAMAP-Rule" id="MF_01346"/>
    </source>
</evidence>
<keyword id="KW-0066">ATP synthesis</keyword>
<keyword id="KW-0067">ATP-binding</keyword>
<keyword id="KW-0997">Cell inner membrane</keyword>
<keyword id="KW-1003">Cell membrane</keyword>
<keyword id="KW-0139">CF(1)</keyword>
<keyword id="KW-0375">Hydrogen ion transport</keyword>
<keyword id="KW-0406">Ion transport</keyword>
<keyword id="KW-0472">Membrane</keyword>
<keyword id="KW-0547">Nucleotide-binding</keyword>
<keyword id="KW-1185">Reference proteome</keyword>
<keyword id="KW-1278">Translocase</keyword>
<keyword id="KW-0813">Transport</keyword>
<sequence>MDIRAAEISAILKDQIKNFGQEAEVSEVGQVLSVGDGIARVYGLDNVQAGEMVEFENGTRGMALNLETDNVGVVIFGADREIKEGQTVKRTRAIVDAPVGKGLLGRVVDALGNPIDGKGPIQADKRMRVDVKAPGIIPRKSVSEPMATGLKAIDALIPIGRGQRELIIGDRQTGKTAIALDTILNQKPLNAQPDENIKLYCVYVAVGQKRSTVAQFVKVLEEQGALEYSIIVAATASDPAPMQYIAPFTACTMGEFFRDNGMHAVIIYDDLSKQAVAYRQMSLLLRRPPGREAYPGDVFYLHSRLLERAAKLSKDHGSGSLTALPIIETQANDVSAYIPTNVISITDGQIFLETDLFFQGIRPAVNVGLSVSRVGSSAQTKATKKVAGKIKGELAQYREMAAFAQFGSDLDASTQRLLNRGSRLTELLKQPQFSPLKMEEQVCVIWAGTNGYLDPLPVNKVRAFEDGLLSLLRGKNVEILNSIRDSRDLSDDTAAKLKSVVEGFAKSFA</sequence>
<proteinExistence type="inferred from homology"/>